<name>SLYD_HELPJ</name>
<accession>Q9ZK89</accession>
<feature type="chain" id="PRO_0000075360" description="FKBP-type peptidyl-prolyl cis-trans isomerase SlyD">
    <location>
        <begin position="1"/>
        <end position="185"/>
    </location>
</feature>
<feature type="domain" description="PPIase FKBP-type" evidence="3">
    <location>
        <begin position="1"/>
        <end position="99"/>
    </location>
</feature>
<feature type="region of interest" description="PPIase first part" evidence="1">
    <location>
        <begin position="1"/>
        <end position="74"/>
    </location>
</feature>
<feature type="region of interest" description="IF-chaperone" evidence="1">
    <location>
        <begin position="81"/>
        <end position="125"/>
    </location>
</feature>
<feature type="region of interest" description="PPIase second part" evidence="1">
    <location>
        <begin position="134"/>
        <end position="156"/>
    </location>
</feature>
<feature type="region of interest" description="Disordered" evidence="4">
    <location>
        <begin position="164"/>
        <end position="185"/>
    </location>
</feature>
<feature type="compositionally biased region" description="Gly residues" evidence="4">
    <location>
        <begin position="164"/>
        <end position="178"/>
    </location>
</feature>
<feature type="binding site" evidence="2">
    <location>
        <position position="163"/>
    </location>
    <ligand>
        <name>Ni(2+)</name>
        <dbReference type="ChEBI" id="CHEBI:49786"/>
    </ligand>
</feature>
<feature type="binding site" evidence="2">
    <location>
        <position position="164"/>
    </location>
    <ligand>
        <name>Ni(2+)</name>
        <dbReference type="ChEBI" id="CHEBI:49786"/>
    </ligand>
</feature>
<feature type="binding site" evidence="2">
    <location>
        <position position="178"/>
    </location>
    <ligand>
        <name>Ni(2+)</name>
        <dbReference type="ChEBI" id="CHEBI:49786"/>
    </ligand>
</feature>
<evidence type="ECO:0000250" key="1"/>
<evidence type="ECO:0000255" key="2"/>
<evidence type="ECO:0000255" key="3">
    <source>
        <dbReference type="PROSITE-ProRule" id="PRU00277"/>
    </source>
</evidence>
<evidence type="ECO:0000256" key="4">
    <source>
        <dbReference type="SAM" id="MobiDB-lite"/>
    </source>
</evidence>
<evidence type="ECO:0000305" key="5"/>
<dbReference type="EC" id="5.2.1.8"/>
<dbReference type="EMBL" id="AE001439">
    <property type="protein sequence ID" value="AAD06631.1"/>
    <property type="molecule type" value="Genomic_DNA"/>
</dbReference>
<dbReference type="PIR" id="D71854">
    <property type="entry name" value="D71854"/>
</dbReference>
<dbReference type="RefSeq" id="WP_001179280.1">
    <property type="nucleotide sequence ID" value="NC_000921.1"/>
</dbReference>
<dbReference type="SMR" id="Q9ZK89"/>
<dbReference type="KEGG" id="hpj:jhp_1052"/>
<dbReference type="PATRIC" id="fig|85963.30.peg.1536"/>
<dbReference type="eggNOG" id="COG1047">
    <property type="taxonomic scope" value="Bacteria"/>
</dbReference>
<dbReference type="Proteomes" id="UP000000804">
    <property type="component" value="Chromosome"/>
</dbReference>
<dbReference type="GO" id="GO:0005737">
    <property type="term" value="C:cytoplasm"/>
    <property type="evidence" value="ECO:0007669"/>
    <property type="project" value="UniProtKB-SubCell"/>
</dbReference>
<dbReference type="GO" id="GO:0046872">
    <property type="term" value="F:metal ion binding"/>
    <property type="evidence" value="ECO:0007669"/>
    <property type="project" value="UniProtKB-KW"/>
</dbReference>
<dbReference type="GO" id="GO:0003755">
    <property type="term" value="F:peptidyl-prolyl cis-trans isomerase activity"/>
    <property type="evidence" value="ECO:0007669"/>
    <property type="project" value="UniProtKB-KW"/>
</dbReference>
<dbReference type="GO" id="GO:0042026">
    <property type="term" value="P:protein refolding"/>
    <property type="evidence" value="ECO:0007669"/>
    <property type="project" value="UniProtKB-ARBA"/>
</dbReference>
<dbReference type="Gene3D" id="2.40.10.330">
    <property type="match status" value="1"/>
</dbReference>
<dbReference type="Gene3D" id="3.10.50.40">
    <property type="match status" value="1"/>
</dbReference>
<dbReference type="InterPro" id="IPR046357">
    <property type="entry name" value="PPIase_dom_sf"/>
</dbReference>
<dbReference type="InterPro" id="IPR001179">
    <property type="entry name" value="PPIase_FKBP_dom"/>
</dbReference>
<dbReference type="InterPro" id="IPR048261">
    <property type="entry name" value="SlpA/SlyD-like_ins_sf"/>
</dbReference>
<dbReference type="PANTHER" id="PTHR47861">
    <property type="entry name" value="FKBP-TYPE PEPTIDYL-PROLYL CIS-TRANS ISOMERASE SLYD"/>
    <property type="match status" value="1"/>
</dbReference>
<dbReference type="PANTHER" id="PTHR47861:SF3">
    <property type="entry name" value="FKBP-TYPE PEPTIDYL-PROLYL CIS-TRANS ISOMERASE SLYD"/>
    <property type="match status" value="1"/>
</dbReference>
<dbReference type="Pfam" id="PF00254">
    <property type="entry name" value="FKBP_C"/>
    <property type="match status" value="1"/>
</dbReference>
<dbReference type="SUPFAM" id="SSF54534">
    <property type="entry name" value="FKBP-like"/>
    <property type="match status" value="1"/>
</dbReference>
<dbReference type="PROSITE" id="PS50059">
    <property type="entry name" value="FKBP_PPIASE"/>
    <property type="match status" value="1"/>
</dbReference>
<sequence>MQNHDLESIKQAALIEYEVREQGSSDVLDSNISKEPLEFIIGANQIIVGLEKAVLKAQIGEWEEIVIAPEEAYGVYESGYLQEVPRDQFEGIELEKGMSVFGQTEDNQTIQATIKDFSNTHVMVDYNHPLAGKTLAFRFKVLGFREVSEEEILASHHDSGTGCCGGHGGHGGKKGGGCGCSCSHG</sequence>
<keyword id="KW-0143">Chaperone</keyword>
<keyword id="KW-0963">Cytoplasm</keyword>
<keyword id="KW-0413">Isomerase</keyword>
<keyword id="KW-0479">Metal-binding</keyword>
<keyword id="KW-0533">Nickel</keyword>
<keyword id="KW-0697">Rotamase</keyword>
<proteinExistence type="inferred from homology"/>
<gene>
    <name type="primary">slyD</name>
    <name type="ordered locus">jhp_1052</name>
</gene>
<comment type="function">
    <text evidence="1">Folding helper with both chaperone and peptidyl-prolyl cis-trans isomerase (PPIase) activities. Chaperone activity prevents aggregation of unfolded or partially folded proteins and promotes their correct folding. PPIases catalyze the cis-trans isomerization of Xaa-Pro bonds of peptides, which accelerates slow steps of protein folding and thus shortens the lifetime of intermediates. Both strategies lower the concentration of intermediates and increase the productivity and yield of the folding reaction (By similarity).</text>
</comment>
<comment type="function">
    <text evidence="1">Also involved in hydrogenase metallocenter assembly, probably by participating in the nickel insertion step. This function in hydrogenase biosynthesis requires chaperone activity and the presence of the metal-binding domain, but not PPIase activity (By similarity).</text>
</comment>
<comment type="catalytic activity">
    <reaction>
        <text>[protein]-peptidylproline (omega=180) = [protein]-peptidylproline (omega=0)</text>
        <dbReference type="Rhea" id="RHEA:16237"/>
        <dbReference type="Rhea" id="RHEA-COMP:10747"/>
        <dbReference type="Rhea" id="RHEA-COMP:10748"/>
        <dbReference type="ChEBI" id="CHEBI:83833"/>
        <dbReference type="ChEBI" id="CHEBI:83834"/>
        <dbReference type="EC" id="5.2.1.8"/>
    </reaction>
</comment>
<comment type="subcellular location">
    <subcellularLocation>
        <location evidence="1">Cytoplasm</location>
    </subcellularLocation>
</comment>
<comment type="domain">
    <text evidence="1">The N-terminal region consists of two globular folded domains that contain prolyl isomerase and chaperone activities.</text>
</comment>
<comment type="domain">
    <text evidence="1">The C-terminal region binds nickel ions.</text>
</comment>
<comment type="similarity">
    <text evidence="5">Belongs to the FKBP-type PPIase family.</text>
</comment>
<reference key="1">
    <citation type="journal article" date="1999" name="Nature">
        <title>Genomic sequence comparison of two unrelated isolates of the human gastric pathogen Helicobacter pylori.</title>
        <authorList>
            <person name="Alm R.A."/>
            <person name="Ling L.-S.L."/>
            <person name="Moir D.T."/>
            <person name="King B.L."/>
            <person name="Brown E.D."/>
            <person name="Doig P.C."/>
            <person name="Smith D.R."/>
            <person name="Noonan B."/>
            <person name="Guild B.C."/>
            <person name="deJonge B.L."/>
            <person name="Carmel G."/>
            <person name="Tummino P.J."/>
            <person name="Caruso A."/>
            <person name="Uria-Nickelsen M."/>
            <person name="Mills D.M."/>
            <person name="Ives C."/>
            <person name="Gibson R."/>
            <person name="Merberg D."/>
            <person name="Mills S.D."/>
            <person name="Jiang Q."/>
            <person name="Taylor D.E."/>
            <person name="Vovis G.F."/>
            <person name="Trust T.J."/>
        </authorList>
    </citation>
    <scope>NUCLEOTIDE SEQUENCE [LARGE SCALE GENOMIC DNA]</scope>
    <source>
        <strain>J99 / ATCC 700824</strain>
    </source>
</reference>
<organism>
    <name type="scientific">Helicobacter pylori (strain J99 / ATCC 700824)</name>
    <name type="common">Campylobacter pylori J99</name>
    <dbReference type="NCBI Taxonomy" id="85963"/>
    <lineage>
        <taxon>Bacteria</taxon>
        <taxon>Pseudomonadati</taxon>
        <taxon>Campylobacterota</taxon>
        <taxon>Epsilonproteobacteria</taxon>
        <taxon>Campylobacterales</taxon>
        <taxon>Helicobacteraceae</taxon>
        <taxon>Helicobacter</taxon>
    </lineage>
</organism>
<protein>
    <recommendedName>
        <fullName>FKBP-type peptidyl-prolyl cis-trans isomerase SlyD</fullName>
        <shortName>PPIase</shortName>
        <ecNumber>5.2.1.8</ecNumber>
    </recommendedName>
    <alternativeName>
        <fullName>Metallochaperone SlyD</fullName>
    </alternativeName>
</protein>